<organism>
    <name type="scientific">Picosynechococcus sp. (strain ATCC 27264 / PCC 7002 / PR-6)</name>
    <name type="common">Agmenellum quadruplicatum</name>
    <dbReference type="NCBI Taxonomy" id="32049"/>
    <lineage>
        <taxon>Bacteria</taxon>
        <taxon>Bacillati</taxon>
        <taxon>Cyanobacteriota</taxon>
        <taxon>Cyanophyceae</taxon>
        <taxon>Oscillatoriophycideae</taxon>
        <taxon>Chroococcales</taxon>
        <taxon>Geminocystaceae</taxon>
        <taxon>Picosynechococcus</taxon>
    </lineage>
</organism>
<reference key="1">
    <citation type="submission" date="2008-02" db="EMBL/GenBank/DDBJ databases">
        <title>Complete sequence of Synechococcus sp. PCC 7002.</title>
        <authorList>
            <person name="Li T."/>
            <person name="Zhao J."/>
            <person name="Zhao C."/>
            <person name="Liu Z."/>
            <person name="Zhao F."/>
            <person name="Marquardt J."/>
            <person name="Nomura C.T."/>
            <person name="Persson S."/>
            <person name="Detter J.C."/>
            <person name="Richardson P.M."/>
            <person name="Lanz C."/>
            <person name="Schuster S.C."/>
            <person name="Wang J."/>
            <person name="Li S."/>
            <person name="Huang X."/>
            <person name="Cai T."/>
            <person name="Yu Z."/>
            <person name="Luo J."/>
            <person name="Zhao J."/>
            <person name="Bryant D.A."/>
        </authorList>
    </citation>
    <scope>NUCLEOTIDE SEQUENCE [LARGE SCALE GENOMIC DNA]</scope>
    <source>
        <strain>ATCC 27264 / PCC 7002 / PR-6</strain>
    </source>
</reference>
<proteinExistence type="inferred from homology"/>
<dbReference type="EC" id="3.5.1.88" evidence="1"/>
<dbReference type="EMBL" id="CP000951">
    <property type="protein sequence ID" value="ACB00326.1"/>
    <property type="molecule type" value="Genomic_DNA"/>
</dbReference>
<dbReference type="RefSeq" id="WP_012307944.1">
    <property type="nucleotide sequence ID" value="NZ_JAHHPU010000006.1"/>
</dbReference>
<dbReference type="SMR" id="B1XJP0"/>
<dbReference type="STRING" id="32049.SYNPCC7002_A2348"/>
<dbReference type="KEGG" id="syp:SYNPCC7002_A2348"/>
<dbReference type="eggNOG" id="COG0242">
    <property type="taxonomic scope" value="Bacteria"/>
</dbReference>
<dbReference type="HOGENOM" id="CLU_061901_4_2_3"/>
<dbReference type="Proteomes" id="UP000001688">
    <property type="component" value="Chromosome"/>
</dbReference>
<dbReference type="GO" id="GO:0046872">
    <property type="term" value="F:metal ion binding"/>
    <property type="evidence" value="ECO:0007669"/>
    <property type="project" value="UniProtKB-KW"/>
</dbReference>
<dbReference type="GO" id="GO:0042586">
    <property type="term" value="F:peptide deformylase activity"/>
    <property type="evidence" value="ECO:0007669"/>
    <property type="project" value="UniProtKB-UniRule"/>
</dbReference>
<dbReference type="GO" id="GO:0043686">
    <property type="term" value="P:co-translational protein modification"/>
    <property type="evidence" value="ECO:0007669"/>
    <property type="project" value="TreeGrafter"/>
</dbReference>
<dbReference type="GO" id="GO:0006412">
    <property type="term" value="P:translation"/>
    <property type="evidence" value="ECO:0007669"/>
    <property type="project" value="UniProtKB-UniRule"/>
</dbReference>
<dbReference type="CDD" id="cd00487">
    <property type="entry name" value="Pep_deformylase"/>
    <property type="match status" value="1"/>
</dbReference>
<dbReference type="FunFam" id="3.90.45.10:FF:000005">
    <property type="entry name" value="Peptide deformylase"/>
    <property type="match status" value="1"/>
</dbReference>
<dbReference type="Gene3D" id="3.90.45.10">
    <property type="entry name" value="Peptide deformylase"/>
    <property type="match status" value="1"/>
</dbReference>
<dbReference type="HAMAP" id="MF_00163">
    <property type="entry name" value="Pep_deformylase"/>
    <property type="match status" value="1"/>
</dbReference>
<dbReference type="InterPro" id="IPR023635">
    <property type="entry name" value="Peptide_deformylase"/>
</dbReference>
<dbReference type="InterPro" id="IPR036821">
    <property type="entry name" value="Peptide_deformylase_sf"/>
</dbReference>
<dbReference type="NCBIfam" id="TIGR00079">
    <property type="entry name" value="pept_deformyl"/>
    <property type="match status" value="1"/>
</dbReference>
<dbReference type="NCBIfam" id="NF001159">
    <property type="entry name" value="PRK00150.1-3"/>
    <property type="match status" value="1"/>
</dbReference>
<dbReference type="PANTHER" id="PTHR10458">
    <property type="entry name" value="PEPTIDE DEFORMYLASE"/>
    <property type="match status" value="1"/>
</dbReference>
<dbReference type="PANTHER" id="PTHR10458:SF22">
    <property type="entry name" value="PEPTIDE DEFORMYLASE"/>
    <property type="match status" value="1"/>
</dbReference>
<dbReference type="Pfam" id="PF01327">
    <property type="entry name" value="Pep_deformylase"/>
    <property type="match status" value="1"/>
</dbReference>
<dbReference type="PIRSF" id="PIRSF004749">
    <property type="entry name" value="Pep_def"/>
    <property type="match status" value="1"/>
</dbReference>
<dbReference type="PRINTS" id="PR01576">
    <property type="entry name" value="PDEFORMYLASE"/>
</dbReference>
<dbReference type="SUPFAM" id="SSF56420">
    <property type="entry name" value="Peptide deformylase"/>
    <property type="match status" value="1"/>
</dbReference>
<name>DEF_PICP2</name>
<evidence type="ECO:0000255" key="1">
    <source>
        <dbReference type="HAMAP-Rule" id="MF_00163"/>
    </source>
</evidence>
<accession>B1XJP0</accession>
<comment type="function">
    <text evidence="1">Removes the formyl group from the N-terminal Met of newly synthesized proteins. Requires at least a dipeptide for an efficient rate of reaction. N-terminal L-methionine is a prerequisite for activity but the enzyme has broad specificity at other positions.</text>
</comment>
<comment type="catalytic activity">
    <reaction evidence="1">
        <text>N-terminal N-formyl-L-methionyl-[peptide] + H2O = N-terminal L-methionyl-[peptide] + formate</text>
        <dbReference type="Rhea" id="RHEA:24420"/>
        <dbReference type="Rhea" id="RHEA-COMP:10639"/>
        <dbReference type="Rhea" id="RHEA-COMP:10640"/>
        <dbReference type="ChEBI" id="CHEBI:15377"/>
        <dbReference type="ChEBI" id="CHEBI:15740"/>
        <dbReference type="ChEBI" id="CHEBI:49298"/>
        <dbReference type="ChEBI" id="CHEBI:64731"/>
        <dbReference type="EC" id="3.5.1.88"/>
    </reaction>
</comment>
<comment type="cofactor">
    <cofactor evidence="1">
        <name>Fe(2+)</name>
        <dbReference type="ChEBI" id="CHEBI:29033"/>
    </cofactor>
    <text evidence="1">Binds 1 Fe(2+) ion.</text>
</comment>
<comment type="similarity">
    <text evidence="1">Belongs to the polypeptide deformylase family.</text>
</comment>
<sequence>MTVGISVEKGKQDTPPLELHYLGDKVLRQKAKRIAKVDDEIRTLAKEMLQTMYSSQGIGLAAPQVGVNKRLIVIDTDPENPANAPLVLINPEIKKFGQQLCPFEEGCLSIPGVHLDVIRPDEIEVSYRDEQGKPKRIKASGLLSRVIQHEIDHLDGVMFVDRVENEIALSSQLKQRGFALKSVQRIA</sequence>
<gene>
    <name evidence="1" type="primary">def</name>
    <name type="ordered locus">SYNPCC7002_A2348</name>
</gene>
<keyword id="KW-0378">Hydrolase</keyword>
<keyword id="KW-0408">Iron</keyword>
<keyword id="KW-0479">Metal-binding</keyword>
<keyword id="KW-0648">Protein biosynthesis</keyword>
<keyword id="KW-1185">Reference proteome</keyword>
<feature type="chain" id="PRO_1000097352" description="Peptide deformylase">
    <location>
        <begin position="1"/>
        <end position="187"/>
    </location>
</feature>
<feature type="active site" evidence="1">
    <location>
        <position position="150"/>
    </location>
</feature>
<feature type="binding site" evidence="1">
    <location>
        <position position="107"/>
    </location>
    <ligand>
        <name>Fe cation</name>
        <dbReference type="ChEBI" id="CHEBI:24875"/>
    </ligand>
</feature>
<feature type="binding site" evidence="1">
    <location>
        <position position="149"/>
    </location>
    <ligand>
        <name>Fe cation</name>
        <dbReference type="ChEBI" id="CHEBI:24875"/>
    </ligand>
</feature>
<feature type="binding site" evidence="1">
    <location>
        <position position="153"/>
    </location>
    <ligand>
        <name>Fe cation</name>
        <dbReference type="ChEBI" id="CHEBI:24875"/>
    </ligand>
</feature>
<protein>
    <recommendedName>
        <fullName evidence="1">Peptide deformylase</fullName>
        <shortName evidence="1">PDF</shortName>
        <ecNumber evidence="1">3.5.1.88</ecNumber>
    </recommendedName>
    <alternativeName>
        <fullName evidence="1">Polypeptide deformylase</fullName>
    </alternativeName>
</protein>